<accession>C0Q8F4</accession>
<organism>
    <name type="scientific">Salmonella paratyphi C (strain RKS4594)</name>
    <dbReference type="NCBI Taxonomy" id="476213"/>
    <lineage>
        <taxon>Bacteria</taxon>
        <taxon>Pseudomonadati</taxon>
        <taxon>Pseudomonadota</taxon>
        <taxon>Gammaproteobacteria</taxon>
        <taxon>Enterobacterales</taxon>
        <taxon>Enterobacteriaceae</taxon>
        <taxon>Salmonella</taxon>
    </lineage>
</organism>
<evidence type="ECO:0000255" key="1">
    <source>
        <dbReference type="HAMAP-Rule" id="MF_00648"/>
    </source>
</evidence>
<comment type="function">
    <text evidence="1">Phosphatase that hydrolyzes non-canonical purine nucleotides such as XTP and ITP to their respective diphosphate derivatives. Probably excludes non-canonical purines from DNA/RNA precursor pool, thus preventing their incorporation into DNA/RNA and avoiding chromosomal lesions.</text>
</comment>
<comment type="catalytic activity">
    <reaction evidence="1">
        <text>XTP + H2O = XDP + phosphate + H(+)</text>
        <dbReference type="Rhea" id="RHEA:28406"/>
        <dbReference type="ChEBI" id="CHEBI:15377"/>
        <dbReference type="ChEBI" id="CHEBI:15378"/>
        <dbReference type="ChEBI" id="CHEBI:43474"/>
        <dbReference type="ChEBI" id="CHEBI:59884"/>
        <dbReference type="ChEBI" id="CHEBI:61314"/>
        <dbReference type="EC" id="3.6.1.73"/>
    </reaction>
</comment>
<comment type="catalytic activity">
    <reaction evidence="1">
        <text>ITP + H2O = IDP + phosphate + H(+)</text>
        <dbReference type="Rhea" id="RHEA:28330"/>
        <dbReference type="ChEBI" id="CHEBI:15377"/>
        <dbReference type="ChEBI" id="CHEBI:15378"/>
        <dbReference type="ChEBI" id="CHEBI:43474"/>
        <dbReference type="ChEBI" id="CHEBI:58280"/>
        <dbReference type="ChEBI" id="CHEBI:61402"/>
        <dbReference type="EC" id="3.6.1.73"/>
    </reaction>
</comment>
<comment type="cofactor">
    <cofactor evidence="1">
        <name>Mg(2+)</name>
        <dbReference type="ChEBI" id="CHEBI:18420"/>
    </cofactor>
    <cofactor evidence="1">
        <name>Mn(2+)</name>
        <dbReference type="ChEBI" id="CHEBI:29035"/>
    </cofactor>
    <text evidence="1">Binds 1 divalent metal cation per subunit; can use either Mg(2+) or Mn(2+).</text>
</comment>
<comment type="subunit">
    <text evidence="1">Homodimer.</text>
</comment>
<comment type="similarity">
    <text evidence="1">Belongs to the YjjX NTPase family.</text>
</comment>
<gene>
    <name type="primary">yjjX</name>
    <name type="ordered locus">SPC_4717</name>
</gene>
<protein>
    <recommendedName>
        <fullName evidence="1">Inosine/xanthosine triphosphatase</fullName>
        <shortName evidence="1">ITPase/XTPase</shortName>
        <ecNumber evidence="1">3.6.1.73</ecNumber>
    </recommendedName>
    <alternativeName>
        <fullName evidence="1">Non-canonical purine NTP phosphatase</fullName>
    </alternativeName>
    <alternativeName>
        <fullName evidence="1">Non-standard purine NTP phosphatase</fullName>
    </alternativeName>
    <alternativeName>
        <fullName evidence="1">Nucleoside-triphosphate phosphatase</fullName>
        <shortName evidence="1">NTPase</shortName>
    </alternativeName>
</protein>
<sequence length="171" mass="18499">MHQVISATTNPAKIQAILQAFEEIFGEGSCHITPVAVESGVPEQPFGSEETRAGARNRVDNAQRLHPQADFWVAIEAGINDDATFSWVVIDNGVQRGEARSATLPLPAVILDRVRQGEALGPVMSHYTGIDEIGRKEGAIGVFTAGKLTRSSVYYQAVILALSPFHNAVYR</sequence>
<keyword id="KW-0378">Hydrolase</keyword>
<keyword id="KW-0460">Magnesium</keyword>
<keyword id="KW-0464">Manganese</keyword>
<keyword id="KW-0479">Metal-binding</keyword>
<keyword id="KW-0546">Nucleotide metabolism</keyword>
<keyword id="KW-0547">Nucleotide-binding</keyword>
<reference key="1">
    <citation type="journal article" date="2009" name="PLoS ONE">
        <title>Salmonella paratyphi C: genetic divergence from Salmonella choleraesuis and pathogenic convergence with Salmonella typhi.</title>
        <authorList>
            <person name="Liu W.-Q."/>
            <person name="Feng Y."/>
            <person name="Wang Y."/>
            <person name="Zou Q.-H."/>
            <person name="Chen F."/>
            <person name="Guo J.-T."/>
            <person name="Peng Y.-H."/>
            <person name="Jin Y."/>
            <person name="Li Y.-G."/>
            <person name="Hu S.-N."/>
            <person name="Johnston R.N."/>
            <person name="Liu G.-R."/>
            <person name="Liu S.-L."/>
        </authorList>
    </citation>
    <scope>NUCLEOTIDE SEQUENCE [LARGE SCALE GENOMIC DNA]</scope>
    <source>
        <strain>RKS4594</strain>
    </source>
</reference>
<feature type="chain" id="PRO_1000198086" description="Inosine/xanthosine triphosphatase">
    <location>
        <begin position="1"/>
        <end position="171"/>
    </location>
</feature>
<feature type="binding site" evidence="1">
    <location>
        <begin position="8"/>
        <end position="13"/>
    </location>
    <ligand>
        <name>substrate</name>
    </ligand>
</feature>
<feature type="binding site" evidence="1">
    <location>
        <position position="38"/>
    </location>
    <ligand>
        <name>Mg(2+)</name>
        <dbReference type="ChEBI" id="CHEBI:18420"/>
    </ligand>
</feature>
<feature type="binding site" evidence="1">
    <location>
        <position position="68"/>
    </location>
    <ligand>
        <name>Mg(2+)</name>
        <dbReference type="ChEBI" id="CHEBI:18420"/>
    </ligand>
</feature>
<name>NCPP_SALPC</name>
<dbReference type="EC" id="3.6.1.73" evidence="1"/>
<dbReference type="EMBL" id="CP000857">
    <property type="protein sequence ID" value="ACN48760.1"/>
    <property type="molecule type" value="Genomic_DNA"/>
</dbReference>
<dbReference type="RefSeq" id="WP_000554306.1">
    <property type="nucleotide sequence ID" value="NC_012125.1"/>
</dbReference>
<dbReference type="SMR" id="C0Q8F4"/>
<dbReference type="KEGG" id="sei:SPC_4717"/>
<dbReference type="HOGENOM" id="CLU_087417_1_0_6"/>
<dbReference type="Proteomes" id="UP000001599">
    <property type="component" value="Chromosome"/>
</dbReference>
<dbReference type="GO" id="GO:0103023">
    <property type="term" value="F:ITPase activity"/>
    <property type="evidence" value="ECO:0007669"/>
    <property type="project" value="UniProtKB-EC"/>
</dbReference>
<dbReference type="GO" id="GO:0046872">
    <property type="term" value="F:metal ion binding"/>
    <property type="evidence" value="ECO:0007669"/>
    <property type="project" value="UniProtKB-KW"/>
</dbReference>
<dbReference type="GO" id="GO:0000166">
    <property type="term" value="F:nucleotide binding"/>
    <property type="evidence" value="ECO:0007669"/>
    <property type="project" value="UniProtKB-KW"/>
</dbReference>
<dbReference type="GO" id="GO:0017111">
    <property type="term" value="F:ribonucleoside triphosphate phosphatase activity"/>
    <property type="evidence" value="ECO:0000250"/>
    <property type="project" value="UniProtKB"/>
</dbReference>
<dbReference type="GO" id="GO:0009117">
    <property type="term" value="P:nucleotide metabolic process"/>
    <property type="evidence" value="ECO:0007669"/>
    <property type="project" value="UniProtKB-KW"/>
</dbReference>
<dbReference type="GO" id="GO:0006772">
    <property type="term" value="P:thiamine metabolic process"/>
    <property type="evidence" value="ECO:0007669"/>
    <property type="project" value="TreeGrafter"/>
</dbReference>
<dbReference type="FunFam" id="3.90.950.10:FF:000002">
    <property type="entry name" value="Inosine/xanthosine triphosphatase"/>
    <property type="match status" value="1"/>
</dbReference>
<dbReference type="Gene3D" id="3.90.950.10">
    <property type="match status" value="1"/>
</dbReference>
<dbReference type="HAMAP" id="MF_00648">
    <property type="entry name" value="Non_canon_purine_NTPase_YjjX"/>
    <property type="match status" value="1"/>
</dbReference>
<dbReference type="InterPro" id="IPR029001">
    <property type="entry name" value="ITPase-like_fam"/>
</dbReference>
<dbReference type="InterPro" id="IPR002786">
    <property type="entry name" value="Non_canon_purine_NTPase"/>
</dbReference>
<dbReference type="InterPro" id="IPR026533">
    <property type="entry name" value="NTPase/PRRC1"/>
</dbReference>
<dbReference type="InterPro" id="IPR050299">
    <property type="entry name" value="YjjX_NTPase"/>
</dbReference>
<dbReference type="NCBIfam" id="TIGR00258">
    <property type="entry name" value="inosine/xanthosine triphosphatase"/>
    <property type="match status" value="1"/>
</dbReference>
<dbReference type="NCBIfam" id="NF003459">
    <property type="entry name" value="PRK05074.1"/>
    <property type="match status" value="1"/>
</dbReference>
<dbReference type="PANTHER" id="PTHR34699">
    <property type="match status" value="1"/>
</dbReference>
<dbReference type="PANTHER" id="PTHR34699:SF2">
    <property type="entry name" value="NON-CANONICAL PURINE NTP PHOSPHATASE_PRRC1 DOMAIN-CONTAINING PROTEIN"/>
    <property type="match status" value="1"/>
</dbReference>
<dbReference type="Pfam" id="PF01931">
    <property type="entry name" value="NTPase_I-T"/>
    <property type="match status" value="1"/>
</dbReference>
<dbReference type="SUPFAM" id="SSF52972">
    <property type="entry name" value="ITPase-like"/>
    <property type="match status" value="1"/>
</dbReference>
<proteinExistence type="inferred from homology"/>